<comment type="function">
    <text evidence="1">An essential GTPase which binds GTP, GDP and possibly (p)ppGpp with moderate affinity, with high nucleotide exchange rates and a fairly low GTP hydrolysis rate. Plays a role in control of the cell cycle, stress response, ribosome biogenesis and in those bacteria that undergo differentiation, in morphogenesis control.</text>
</comment>
<comment type="cofactor">
    <cofactor evidence="1">
        <name>Mg(2+)</name>
        <dbReference type="ChEBI" id="CHEBI:18420"/>
    </cofactor>
</comment>
<comment type="subunit">
    <text evidence="1">Monomer.</text>
</comment>
<comment type="subcellular location">
    <subcellularLocation>
        <location evidence="1">Cytoplasm</location>
    </subcellularLocation>
</comment>
<comment type="similarity">
    <text evidence="1">Belongs to the TRAFAC class OBG-HflX-like GTPase superfamily. OBG GTPase family.</text>
</comment>
<proteinExistence type="inferred from homology"/>
<evidence type="ECO:0000255" key="1">
    <source>
        <dbReference type="HAMAP-Rule" id="MF_01454"/>
    </source>
</evidence>
<evidence type="ECO:0000255" key="2">
    <source>
        <dbReference type="PROSITE-ProRule" id="PRU01231"/>
    </source>
</evidence>
<evidence type="ECO:0000256" key="3">
    <source>
        <dbReference type="SAM" id="MobiDB-lite"/>
    </source>
</evidence>
<feature type="chain" id="PRO_0000386234" description="GTPase Obg">
    <location>
        <begin position="1"/>
        <end position="390"/>
    </location>
</feature>
<feature type="domain" description="Obg" evidence="2">
    <location>
        <begin position="1"/>
        <end position="159"/>
    </location>
</feature>
<feature type="domain" description="OBG-type G" evidence="1">
    <location>
        <begin position="160"/>
        <end position="333"/>
    </location>
</feature>
<feature type="region of interest" description="Disordered" evidence="3">
    <location>
        <begin position="366"/>
        <end position="390"/>
    </location>
</feature>
<feature type="compositionally biased region" description="Acidic residues" evidence="3">
    <location>
        <begin position="366"/>
        <end position="384"/>
    </location>
</feature>
<feature type="binding site" evidence="1">
    <location>
        <begin position="166"/>
        <end position="173"/>
    </location>
    <ligand>
        <name>GTP</name>
        <dbReference type="ChEBI" id="CHEBI:37565"/>
    </ligand>
</feature>
<feature type="binding site" evidence="1">
    <location>
        <position position="173"/>
    </location>
    <ligand>
        <name>Mg(2+)</name>
        <dbReference type="ChEBI" id="CHEBI:18420"/>
    </ligand>
</feature>
<feature type="binding site" evidence="1">
    <location>
        <begin position="191"/>
        <end position="195"/>
    </location>
    <ligand>
        <name>GTP</name>
        <dbReference type="ChEBI" id="CHEBI:37565"/>
    </ligand>
</feature>
<feature type="binding site" evidence="1">
    <location>
        <position position="193"/>
    </location>
    <ligand>
        <name>Mg(2+)</name>
        <dbReference type="ChEBI" id="CHEBI:18420"/>
    </ligand>
</feature>
<feature type="binding site" evidence="1">
    <location>
        <begin position="213"/>
        <end position="216"/>
    </location>
    <ligand>
        <name>GTP</name>
        <dbReference type="ChEBI" id="CHEBI:37565"/>
    </ligand>
</feature>
<feature type="binding site" evidence="1">
    <location>
        <begin position="283"/>
        <end position="286"/>
    </location>
    <ligand>
        <name>GTP</name>
        <dbReference type="ChEBI" id="CHEBI:37565"/>
    </ligand>
</feature>
<feature type="binding site" evidence="1">
    <location>
        <begin position="314"/>
        <end position="316"/>
    </location>
    <ligand>
        <name>GTP</name>
        <dbReference type="ChEBI" id="CHEBI:37565"/>
    </ligand>
</feature>
<accession>A8G8Z4</accession>
<gene>
    <name evidence="1" type="primary">obg</name>
    <name type="ordered locus">Spro_0476</name>
</gene>
<organism>
    <name type="scientific">Serratia proteamaculans (strain 568)</name>
    <dbReference type="NCBI Taxonomy" id="399741"/>
    <lineage>
        <taxon>Bacteria</taxon>
        <taxon>Pseudomonadati</taxon>
        <taxon>Pseudomonadota</taxon>
        <taxon>Gammaproteobacteria</taxon>
        <taxon>Enterobacterales</taxon>
        <taxon>Yersiniaceae</taxon>
        <taxon>Serratia</taxon>
    </lineage>
</organism>
<sequence>MKFVDEAAILVVAGDGGNGCVSFRREKYIPNGGPDGGDGGDGGDVYLLADENLNTLIDYRFEKSFRAERGQNGQSRDCTGKRGKDITIKVPVGTRVQDQGTGEILGDMTRHEQRLMVAKGGWHGLGNTRFKSSVNRAPRQKTLGTAGEARDILLELLLLADVGMLGLPNAGKSTFIRAVSAAKPKVADYPFTTLVPSLGVVRMDHEQSFVVADIPGLIEGASDGAGLGIRFLKHLERCRVLLHLVDIAPIDESDPVENAKVIINELNQYSENLSQKPRWLVFNKIDVIGEEEAAERAKAIAEGMGWEGKYYMISAVNREGVNALCWDVMKFINTQPKAMAIEESAPEKVEFMWDDYHREQIAEVEAEADDDWDDDWDEEDDEGVEIIYQK</sequence>
<keyword id="KW-0963">Cytoplasm</keyword>
<keyword id="KW-0342">GTP-binding</keyword>
<keyword id="KW-0378">Hydrolase</keyword>
<keyword id="KW-0460">Magnesium</keyword>
<keyword id="KW-0479">Metal-binding</keyword>
<keyword id="KW-0547">Nucleotide-binding</keyword>
<name>OBG_SERP5</name>
<dbReference type="EC" id="3.6.5.-" evidence="1"/>
<dbReference type="EMBL" id="CP000826">
    <property type="protein sequence ID" value="ABV39584.1"/>
    <property type="molecule type" value="Genomic_DNA"/>
</dbReference>
<dbReference type="SMR" id="A8G8Z4"/>
<dbReference type="STRING" id="399741.Spro_0476"/>
<dbReference type="KEGG" id="spe:Spro_0476"/>
<dbReference type="eggNOG" id="COG0536">
    <property type="taxonomic scope" value="Bacteria"/>
</dbReference>
<dbReference type="HOGENOM" id="CLU_011747_2_0_6"/>
<dbReference type="OrthoDB" id="9807318at2"/>
<dbReference type="GO" id="GO:0005737">
    <property type="term" value="C:cytoplasm"/>
    <property type="evidence" value="ECO:0007669"/>
    <property type="project" value="UniProtKB-SubCell"/>
</dbReference>
<dbReference type="GO" id="GO:0005525">
    <property type="term" value="F:GTP binding"/>
    <property type="evidence" value="ECO:0007669"/>
    <property type="project" value="UniProtKB-UniRule"/>
</dbReference>
<dbReference type="GO" id="GO:0003924">
    <property type="term" value="F:GTPase activity"/>
    <property type="evidence" value="ECO:0007669"/>
    <property type="project" value="UniProtKB-UniRule"/>
</dbReference>
<dbReference type="GO" id="GO:0000287">
    <property type="term" value="F:magnesium ion binding"/>
    <property type="evidence" value="ECO:0007669"/>
    <property type="project" value="InterPro"/>
</dbReference>
<dbReference type="GO" id="GO:0042254">
    <property type="term" value="P:ribosome biogenesis"/>
    <property type="evidence" value="ECO:0007669"/>
    <property type="project" value="UniProtKB-UniRule"/>
</dbReference>
<dbReference type="CDD" id="cd01898">
    <property type="entry name" value="Obg"/>
    <property type="match status" value="1"/>
</dbReference>
<dbReference type="FunFam" id="2.70.210.12:FF:000001">
    <property type="entry name" value="GTPase Obg"/>
    <property type="match status" value="1"/>
</dbReference>
<dbReference type="FunFam" id="3.40.50.300:FF:000185">
    <property type="entry name" value="GTPase Obg"/>
    <property type="match status" value="1"/>
</dbReference>
<dbReference type="Gene3D" id="2.70.210.12">
    <property type="entry name" value="GTP1/OBG domain"/>
    <property type="match status" value="1"/>
</dbReference>
<dbReference type="Gene3D" id="3.40.50.300">
    <property type="entry name" value="P-loop containing nucleotide triphosphate hydrolases"/>
    <property type="match status" value="1"/>
</dbReference>
<dbReference type="HAMAP" id="MF_01454">
    <property type="entry name" value="GTPase_Obg"/>
    <property type="match status" value="1"/>
</dbReference>
<dbReference type="InterPro" id="IPR031167">
    <property type="entry name" value="G_OBG"/>
</dbReference>
<dbReference type="InterPro" id="IPR006073">
    <property type="entry name" value="GTP-bd"/>
</dbReference>
<dbReference type="InterPro" id="IPR014100">
    <property type="entry name" value="GTP-bd_Obg/CgtA"/>
</dbReference>
<dbReference type="InterPro" id="IPR006074">
    <property type="entry name" value="GTP1-OBG_CS"/>
</dbReference>
<dbReference type="InterPro" id="IPR006169">
    <property type="entry name" value="GTP1_OBG_dom"/>
</dbReference>
<dbReference type="InterPro" id="IPR036726">
    <property type="entry name" value="GTP1_OBG_dom_sf"/>
</dbReference>
<dbReference type="InterPro" id="IPR045086">
    <property type="entry name" value="OBG_GTPase"/>
</dbReference>
<dbReference type="InterPro" id="IPR027417">
    <property type="entry name" value="P-loop_NTPase"/>
</dbReference>
<dbReference type="NCBIfam" id="TIGR02729">
    <property type="entry name" value="Obg_CgtA"/>
    <property type="match status" value="1"/>
</dbReference>
<dbReference type="NCBIfam" id="NF008955">
    <property type="entry name" value="PRK12297.1"/>
    <property type="match status" value="1"/>
</dbReference>
<dbReference type="NCBIfam" id="NF008956">
    <property type="entry name" value="PRK12299.1"/>
    <property type="match status" value="1"/>
</dbReference>
<dbReference type="PANTHER" id="PTHR11702">
    <property type="entry name" value="DEVELOPMENTALLY REGULATED GTP-BINDING PROTEIN-RELATED"/>
    <property type="match status" value="1"/>
</dbReference>
<dbReference type="PANTHER" id="PTHR11702:SF31">
    <property type="entry name" value="MITOCHONDRIAL RIBOSOME-ASSOCIATED GTPASE 2"/>
    <property type="match status" value="1"/>
</dbReference>
<dbReference type="Pfam" id="PF01018">
    <property type="entry name" value="GTP1_OBG"/>
    <property type="match status" value="1"/>
</dbReference>
<dbReference type="Pfam" id="PF01926">
    <property type="entry name" value="MMR_HSR1"/>
    <property type="match status" value="1"/>
</dbReference>
<dbReference type="PIRSF" id="PIRSF002401">
    <property type="entry name" value="GTP_bd_Obg/CgtA"/>
    <property type="match status" value="1"/>
</dbReference>
<dbReference type="PRINTS" id="PR00326">
    <property type="entry name" value="GTP1OBG"/>
</dbReference>
<dbReference type="SUPFAM" id="SSF82051">
    <property type="entry name" value="Obg GTP-binding protein N-terminal domain"/>
    <property type="match status" value="1"/>
</dbReference>
<dbReference type="SUPFAM" id="SSF52540">
    <property type="entry name" value="P-loop containing nucleoside triphosphate hydrolases"/>
    <property type="match status" value="1"/>
</dbReference>
<dbReference type="PROSITE" id="PS51710">
    <property type="entry name" value="G_OBG"/>
    <property type="match status" value="1"/>
</dbReference>
<dbReference type="PROSITE" id="PS00905">
    <property type="entry name" value="GTP1_OBG"/>
    <property type="match status" value="1"/>
</dbReference>
<dbReference type="PROSITE" id="PS51883">
    <property type="entry name" value="OBG"/>
    <property type="match status" value="1"/>
</dbReference>
<reference key="1">
    <citation type="submission" date="2007-09" db="EMBL/GenBank/DDBJ databases">
        <title>Complete sequence of chromosome of Serratia proteamaculans 568.</title>
        <authorList>
            <consortium name="US DOE Joint Genome Institute"/>
            <person name="Copeland A."/>
            <person name="Lucas S."/>
            <person name="Lapidus A."/>
            <person name="Barry K."/>
            <person name="Glavina del Rio T."/>
            <person name="Dalin E."/>
            <person name="Tice H."/>
            <person name="Pitluck S."/>
            <person name="Chain P."/>
            <person name="Malfatti S."/>
            <person name="Shin M."/>
            <person name="Vergez L."/>
            <person name="Schmutz J."/>
            <person name="Larimer F."/>
            <person name="Land M."/>
            <person name="Hauser L."/>
            <person name="Kyrpides N."/>
            <person name="Kim E."/>
            <person name="Taghavi S."/>
            <person name="Newman L."/>
            <person name="Vangronsveld J."/>
            <person name="van der Lelie D."/>
            <person name="Richardson P."/>
        </authorList>
    </citation>
    <scope>NUCLEOTIDE SEQUENCE [LARGE SCALE GENOMIC DNA]</scope>
    <source>
        <strain>568</strain>
    </source>
</reference>
<protein>
    <recommendedName>
        <fullName evidence="1">GTPase Obg</fullName>
        <ecNumber evidence="1">3.6.5.-</ecNumber>
    </recommendedName>
    <alternativeName>
        <fullName evidence="1">GTP-binding protein Obg</fullName>
    </alternativeName>
</protein>